<protein>
    <recommendedName>
        <fullName>Transcription factor bHLH157</fullName>
    </recommendedName>
    <alternativeName>
        <fullName>BHLH transcription factor epsilon</fullName>
        <shortName>bHLH epsilon</shortName>
    </alternativeName>
    <alternativeName>
        <fullName>Basic helix-loop-helix protein 157</fullName>
        <shortName>AtbHLH157</shortName>
        <shortName>bHLH 157</shortName>
    </alternativeName>
    <alternativeName>
        <fullName>LONESOME HIGHWAY-like protein 2</fullName>
    </alternativeName>
    <alternativeName>
        <fullName>bHLH transcription factor bHLH157</fullName>
    </alternativeName>
</protein>
<dbReference type="EMBL" id="AJ576044">
    <property type="protein sequence ID" value="CAE09171.1"/>
    <property type="molecule type" value="mRNA"/>
</dbReference>
<dbReference type="EMBL" id="AC009519">
    <property type="protein sequence ID" value="AAF19679.1"/>
    <property type="status" value="ALT_SEQ"/>
    <property type="molecule type" value="Genomic_DNA"/>
</dbReference>
<dbReference type="EMBL" id="CP002684">
    <property type="protein sequence ID" value="AEE34263.1"/>
    <property type="molecule type" value="Genomic_DNA"/>
</dbReference>
<dbReference type="EMBL" id="CP002684">
    <property type="protein sequence ID" value="AEE34264.1"/>
    <property type="molecule type" value="Genomic_DNA"/>
</dbReference>
<dbReference type="EMBL" id="AB493518">
    <property type="protein sequence ID" value="BAH30356.1"/>
    <property type="molecule type" value="mRNA"/>
</dbReference>
<dbReference type="RefSeq" id="NP_001117547.1">
    <molecule id="Q7XJU0-2"/>
    <property type="nucleotide sequence ID" value="NM_001124075.2"/>
</dbReference>
<dbReference type="RefSeq" id="NP_849917.2">
    <molecule id="Q7XJU0-1"/>
    <property type="nucleotide sequence ID" value="NM_179586.3"/>
</dbReference>
<dbReference type="SMR" id="Q7XJU0"/>
<dbReference type="BioGRID" id="29659">
    <property type="interactions" value="14"/>
</dbReference>
<dbReference type="FunCoup" id="Q7XJU0">
    <property type="interactions" value="4"/>
</dbReference>
<dbReference type="IntAct" id="Q7XJU0">
    <property type="interactions" value="14"/>
</dbReference>
<dbReference type="STRING" id="3702.Q7XJU0"/>
<dbReference type="PaxDb" id="3702-AT1G64625.1"/>
<dbReference type="EnsemblPlants" id="AT1G64625.1">
    <molecule id="Q7XJU0-1"/>
    <property type="protein sequence ID" value="AT1G64625.1"/>
    <property type="gene ID" value="AT1G64625"/>
</dbReference>
<dbReference type="EnsemblPlants" id="AT1G64625.2">
    <molecule id="Q7XJU0-2"/>
    <property type="protein sequence ID" value="AT1G64625.2"/>
    <property type="gene ID" value="AT1G64625"/>
</dbReference>
<dbReference type="GeneID" id="844441"/>
<dbReference type="Gramene" id="AT1G64625.1">
    <molecule id="Q7XJU0-1"/>
    <property type="protein sequence ID" value="AT1G64625.1"/>
    <property type="gene ID" value="AT1G64625"/>
</dbReference>
<dbReference type="Gramene" id="AT1G64625.2">
    <molecule id="Q7XJU0-2"/>
    <property type="protein sequence ID" value="AT1G64625.2"/>
    <property type="gene ID" value="AT1G64625"/>
</dbReference>
<dbReference type="KEGG" id="ath:AT1G64625"/>
<dbReference type="Araport" id="AT1G64625"/>
<dbReference type="TAIR" id="AT1G64625">
    <property type="gene designation" value="LHL3"/>
</dbReference>
<dbReference type="eggNOG" id="ENOG502QQES">
    <property type="taxonomic scope" value="Eukaryota"/>
</dbReference>
<dbReference type="HOGENOM" id="CLU_574101_0_0_1"/>
<dbReference type="InParanoid" id="Q7XJU0"/>
<dbReference type="OMA" id="NSYSWDD"/>
<dbReference type="PhylomeDB" id="Q7XJU0"/>
<dbReference type="PRO" id="PR:Q7XJU0"/>
<dbReference type="Proteomes" id="UP000006548">
    <property type="component" value="Chromosome 1"/>
</dbReference>
<dbReference type="ExpressionAtlas" id="Q7XJU0">
    <property type="expression patterns" value="baseline and differential"/>
</dbReference>
<dbReference type="GO" id="GO:0005634">
    <property type="term" value="C:nucleus"/>
    <property type="evidence" value="ECO:0000314"/>
    <property type="project" value="TAIR"/>
</dbReference>
<dbReference type="GO" id="GO:0003677">
    <property type="term" value="F:DNA binding"/>
    <property type="evidence" value="ECO:0007669"/>
    <property type="project" value="UniProtKB-KW"/>
</dbReference>
<dbReference type="GO" id="GO:0003700">
    <property type="term" value="F:DNA-binding transcription factor activity"/>
    <property type="evidence" value="ECO:0000250"/>
    <property type="project" value="TAIR"/>
</dbReference>
<dbReference type="GO" id="GO:0046983">
    <property type="term" value="F:protein dimerization activity"/>
    <property type="evidence" value="ECO:0007669"/>
    <property type="project" value="InterPro"/>
</dbReference>
<dbReference type="GO" id="GO:0071365">
    <property type="term" value="P:cellular response to auxin stimulus"/>
    <property type="evidence" value="ECO:0000270"/>
    <property type="project" value="TAIR"/>
</dbReference>
<dbReference type="GO" id="GO:0007140">
    <property type="term" value="P:male meiotic nuclear division"/>
    <property type="evidence" value="ECO:0000315"/>
    <property type="project" value="TAIR"/>
</dbReference>
<dbReference type="GO" id="GO:0051321">
    <property type="term" value="P:meiotic cell cycle"/>
    <property type="evidence" value="ECO:0000315"/>
    <property type="project" value="TAIR"/>
</dbReference>
<dbReference type="GO" id="GO:0090058">
    <property type="term" value="P:metaxylem development"/>
    <property type="evidence" value="ECO:0000315"/>
    <property type="project" value="TAIR"/>
</dbReference>
<dbReference type="GO" id="GO:0048364">
    <property type="term" value="P:root development"/>
    <property type="evidence" value="ECO:0000250"/>
    <property type="project" value="UniProtKB"/>
</dbReference>
<dbReference type="GO" id="GO:0048316">
    <property type="term" value="P:seed development"/>
    <property type="evidence" value="ECO:0000315"/>
    <property type="project" value="TAIR"/>
</dbReference>
<dbReference type="GO" id="GO:0010089">
    <property type="term" value="P:xylem development"/>
    <property type="evidence" value="ECO:0000316"/>
    <property type="project" value="TAIR"/>
</dbReference>
<dbReference type="CDD" id="cd18915">
    <property type="entry name" value="bHLH_AtLHW_like"/>
    <property type="match status" value="1"/>
</dbReference>
<dbReference type="InterPro" id="IPR011598">
    <property type="entry name" value="bHLH_dom"/>
</dbReference>
<dbReference type="InterPro" id="IPR043561">
    <property type="entry name" value="LHW-like"/>
</dbReference>
<dbReference type="InterPro" id="IPR025610">
    <property type="entry name" value="MYC/MYB_N"/>
</dbReference>
<dbReference type="PANTHER" id="PTHR46196">
    <property type="entry name" value="TRANSCRIPTION FACTOR BHLH155-LIKE ISOFORM X1-RELATED"/>
    <property type="match status" value="1"/>
</dbReference>
<dbReference type="PANTHER" id="PTHR46196:SF2">
    <property type="entry name" value="TRANSCRIPTION FACTOR BHLH157"/>
    <property type="match status" value="1"/>
</dbReference>
<dbReference type="Pfam" id="PF14215">
    <property type="entry name" value="bHLH-MYC_N"/>
    <property type="match status" value="1"/>
</dbReference>
<dbReference type="Pfam" id="PF23176">
    <property type="entry name" value="bHLH_LHW"/>
    <property type="match status" value="1"/>
</dbReference>
<dbReference type="PROSITE" id="PS50888">
    <property type="entry name" value="BHLH"/>
    <property type="match status" value="1"/>
</dbReference>
<accession>Q7XJU0</accession>
<accession>B3H7K3</accession>
<accession>C0SV15</accession>
<accession>Q9SGV2</accession>
<proteinExistence type="evidence at protein level"/>
<evidence type="ECO:0000250" key="1"/>
<evidence type="ECO:0000255" key="2">
    <source>
        <dbReference type="PROSITE-ProRule" id="PRU00981"/>
    </source>
</evidence>
<evidence type="ECO:0000256" key="3">
    <source>
        <dbReference type="SAM" id="MobiDB-lite"/>
    </source>
</evidence>
<evidence type="ECO:0000303" key="4">
    <source ref="4"/>
</evidence>
<evidence type="ECO:0000305" key="5"/>
<name>LHWL2_ARATH</name>
<reference key="1">
    <citation type="journal article" date="2003" name="Plant Cell">
        <title>Update on the basic helix-loop-helix transcription factor gene family in Arabidopsis thaliana.</title>
        <authorList>
            <person name="Bailey P.C."/>
            <person name="Martin C."/>
            <person name="Toledo-Ortiz G."/>
            <person name="Quail P.H."/>
            <person name="Huq E."/>
            <person name="Heim M.A."/>
            <person name="Jakoby M."/>
            <person name="Werber M."/>
            <person name="Weisshaar B."/>
        </authorList>
    </citation>
    <scope>NUCLEOTIDE SEQUENCE [MRNA] (ISOFORM 1)</scope>
    <scope>GENE FAMILY</scope>
    <scope>NOMENCLATURE</scope>
</reference>
<reference key="2">
    <citation type="journal article" date="2000" name="Nature">
        <title>Sequence and analysis of chromosome 1 of the plant Arabidopsis thaliana.</title>
        <authorList>
            <person name="Theologis A."/>
            <person name="Ecker J.R."/>
            <person name="Palm C.J."/>
            <person name="Federspiel N.A."/>
            <person name="Kaul S."/>
            <person name="White O."/>
            <person name="Alonso J."/>
            <person name="Altafi H."/>
            <person name="Araujo R."/>
            <person name="Bowman C.L."/>
            <person name="Brooks S.Y."/>
            <person name="Buehler E."/>
            <person name="Chan A."/>
            <person name="Chao Q."/>
            <person name="Chen H."/>
            <person name="Cheuk R.F."/>
            <person name="Chin C.W."/>
            <person name="Chung M.K."/>
            <person name="Conn L."/>
            <person name="Conway A.B."/>
            <person name="Conway A.R."/>
            <person name="Creasy T.H."/>
            <person name="Dewar K."/>
            <person name="Dunn P."/>
            <person name="Etgu P."/>
            <person name="Feldblyum T.V."/>
            <person name="Feng J.-D."/>
            <person name="Fong B."/>
            <person name="Fujii C.Y."/>
            <person name="Gill J.E."/>
            <person name="Goldsmith A.D."/>
            <person name="Haas B."/>
            <person name="Hansen N.F."/>
            <person name="Hughes B."/>
            <person name="Huizar L."/>
            <person name="Hunter J.L."/>
            <person name="Jenkins J."/>
            <person name="Johnson-Hopson C."/>
            <person name="Khan S."/>
            <person name="Khaykin E."/>
            <person name="Kim C.J."/>
            <person name="Koo H.L."/>
            <person name="Kremenetskaia I."/>
            <person name="Kurtz D.B."/>
            <person name="Kwan A."/>
            <person name="Lam B."/>
            <person name="Langin-Hooper S."/>
            <person name="Lee A."/>
            <person name="Lee J.M."/>
            <person name="Lenz C.A."/>
            <person name="Li J.H."/>
            <person name="Li Y.-P."/>
            <person name="Lin X."/>
            <person name="Liu S.X."/>
            <person name="Liu Z.A."/>
            <person name="Luros J.S."/>
            <person name="Maiti R."/>
            <person name="Marziali A."/>
            <person name="Militscher J."/>
            <person name="Miranda M."/>
            <person name="Nguyen M."/>
            <person name="Nierman W.C."/>
            <person name="Osborne B.I."/>
            <person name="Pai G."/>
            <person name="Peterson J."/>
            <person name="Pham P.K."/>
            <person name="Rizzo M."/>
            <person name="Rooney T."/>
            <person name="Rowley D."/>
            <person name="Sakano H."/>
            <person name="Salzberg S.L."/>
            <person name="Schwartz J.R."/>
            <person name="Shinn P."/>
            <person name="Southwick A.M."/>
            <person name="Sun H."/>
            <person name="Tallon L.J."/>
            <person name="Tambunga G."/>
            <person name="Toriumi M.J."/>
            <person name="Town C.D."/>
            <person name="Utterback T."/>
            <person name="Van Aken S."/>
            <person name="Vaysberg M."/>
            <person name="Vysotskaia V.S."/>
            <person name="Walker M."/>
            <person name="Wu D."/>
            <person name="Yu G."/>
            <person name="Fraser C.M."/>
            <person name="Venter J.C."/>
            <person name="Davis R.W."/>
        </authorList>
    </citation>
    <scope>NUCLEOTIDE SEQUENCE [LARGE SCALE GENOMIC DNA]</scope>
    <source>
        <strain>cv. Columbia</strain>
    </source>
</reference>
<reference key="3">
    <citation type="journal article" date="2017" name="Plant J.">
        <title>Araport11: a complete reannotation of the Arabidopsis thaliana reference genome.</title>
        <authorList>
            <person name="Cheng C.Y."/>
            <person name="Krishnakumar V."/>
            <person name="Chan A.P."/>
            <person name="Thibaud-Nissen F."/>
            <person name="Schobel S."/>
            <person name="Town C.D."/>
        </authorList>
    </citation>
    <scope>GENOME REANNOTATION</scope>
    <source>
        <strain>cv. Columbia</strain>
    </source>
</reference>
<reference key="4">
    <citation type="submission" date="2009-03" db="EMBL/GenBank/DDBJ databases">
        <title>ORF cloning and analysis of Arabidopsis transcription factor genes.</title>
        <authorList>
            <person name="Fujita M."/>
            <person name="Mizukado S."/>
            <person name="Seki M."/>
            <person name="Shinozaki K."/>
            <person name="Mitsuda N."/>
            <person name="Takiguchi Y."/>
            <person name="Takagi M."/>
        </authorList>
    </citation>
    <scope>NUCLEOTIDE SEQUENCE [LARGE SCALE MRNA] (ISOFORM 2)</scope>
</reference>
<reference key="5">
    <citation type="journal article" date="2007" name="Development">
        <title>Regulation of the Arabidopsis root vascular initial population by LONESOME HIGHWAY.</title>
        <authorList>
            <person name="Ohashi-Ito K."/>
            <person name="Bergmann D.C."/>
        </authorList>
    </citation>
    <scope>GENE FAMILY</scope>
</reference>
<keyword id="KW-0025">Alternative splicing</keyword>
<keyword id="KW-0217">Developmental protein</keyword>
<keyword id="KW-0238">DNA-binding</keyword>
<keyword id="KW-0539">Nucleus</keyword>
<keyword id="KW-1185">Reference proteome</keyword>
<keyword id="KW-0804">Transcription</keyword>
<keyword id="KW-0805">Transcription regulation</keyword>
<organism>
    <name type="scientific">Arabidopsis thaliana</name>
    <name type="common">Mouse-ear cress</name>
    <dbReference type="NCBI Taxonomy" id="3702"/>
    <lineage>
        <taxon>Eukaryota</taxon>
        <taxon>Viridiplantae</taxon>
        <taxon>Streptophyta</taxon>
        <taxon>Embryophyta</taxon>
        <taxon>Tracheophyta</taxon>
        <taxon>Spermatophyta</taxon>
        <taxon>Magnoliopsida</taxon>
        <taxon>eudicotyledons</taxon>
        <taxon>Gunneridae</taxon>
        <taxon>Pentapetalae</taxon>
        <taxon>rosids</taxon>
        <taxon>malvids</taxon>
        <taxon>Brassicales</taxon>
        <taxon>Brassicaceae</taxon>
        <taxon>Camelineae</taxon>
        <taxon>Arabidopsis</taxon>
    </lineage>
</organism>
<comment type="function">
    <text evidence="1">Transcription factor that may regulate root development.</text>
</comment>
<comment type="subunit">
    <text evidence="1">Homodimer.</text>
</comment>
<comment type="interaction">
    <interactant intactId="EBI-15196985">
        <id>Q7XJU0-2</id>
    </interactant>
    <interactant intactId="EBI-15194247">
        <id>Q9FY69</id>
        <label>BHLH143</label>
    </interactant>
    <organismsDiffer>false</organismsDiffer>
    <experiments>3</experiments>
</comment>
<comment type="interaction">
    <interactant intactId="EBI-15196985">
        <id>Q7XJU0-2</id>
    </interactant>
    <interactant intactId="EBI-1638784">
        <id>Q570R7</id>
        <label>BHLH72</label>
    </interactant>
    <organismsDiffer>false</organismsDiffer>
    <experiments>3</experiments>
</comment>
<comment type="subcellular location">
    <subcellularLocation>
        <location evidence="2">Nucleus</location>
    </subcellularLocation>
</comment>
<comment type="alternative products">
    <event type="alternative splicing"/>
    <isoform>
        <id>Q7XJU0-1</id>
        <name>1</name>
        <sequence type="displayed"/>
    </isoform>
    <isoform>
        <id>Q7XJU0-2</id>
        <name>2</name>
        <sequence type="described" ref="VSP_035527"/>
    </isoform>
</comment>
<comment type="similarity">
    <text evidence="5">Belongs to the bHLH protein family. LHW subfamily.</text>
</comment>
<comment type="sequence caution" evidence="5">
    <conflict type="erroneous gene model prediction">
        <sequence resource="EMBL-CDS" id="AAF19679"/>
    </conflict>
    <text>The predicted gene At1g64630 has been split into 2 genes: At1g64625 and At1g64630.</text>
</comment>
<feature type="chain" id="PRO_0000351658" description="Transcription factor bHLH157">
    <location>
        <begin position="1"/>
        <end position="527"/>
    </location>
</feature>
<feature type="domain" description="bHLH" evidence="2">
    <location>
        <begin position="354"/>
        <end position="403"/>
    </location>
</feature>
<feature type="region of interest" description="Disordered" evidence="3">
    <location>
        <begin position="295"/>
        <end position="318"/>
    </location>
</feature>
<feature type="region of interest" description="Disordered" evidence="3">
    <location>
        <begin position="335"/>
        <end position="368"/>
    </location>
</feature>
<feature type="short sequence motif" description="Nuclear localization signal" evidence="1">
    <location>
        <begin position="341"/>
        <end position="348"/>
    </location>
</feature>
<feature type="compositionally biased region" description="Polar residues" evidence="3">
    <location>
        <begin position="307"/>
        <end position="318"/>
    </location>
</feature>
<feature type="compositionally biased region" description="Basic and acidic residues" evidence="3">
    <location>
        <begin position="343"/>
        <end position="368"/>
    </location>
</feature>
<feature type="splice variant" id="VSP_035527" description="In isoform 2." evidence="4">
    <location>
        <begin position="98"/>
        <end position="107"/>
    </location>
</feature>
<sequence length="527" mass="59576">MGSEYKHILKSLCLSHGWSYAVFWRYDPINSMILRFEEAYNDEQSVALVDDMVLQAPILGQGIVGEVASSGNHQWLFSDTLFQWEHEFQNQFLCGFKILIRQFTYTQTIAIIPLGSSGVVQLGSTQKILESTEILEQTTRALQETCLKPHDSGDLDTLFESLGDCEIFPAESFQGFSFDDIFAEDNPPSLLSPEMISSEAASSNQDLTNGDDYGFDILQSYSLDDLYQLLADPPEQNCSSMVIQGVDKDLFDILGMNSQTPTMALPPKGLFSELISSSLSNNTCSSSLTNVQEYSGVNQSKRRKLDTSSAHSSSLFPQEETVTSRSLWIDDDERSSIGGNWKKPHEEGVKKKRAKAGESRRPRPKDRQMIQDRIKELRGMIPNGAKCSIDTLLDLTIKHMVFMQSLAKYAERLKQPYESKLVKEKERTWALEVGEEGVVCPIMVEELNREGEMQIEMVCEEREEFLEIGQVVRGLGLKILKGVMETRKGQIWAHFIVQAKPQVTRIQVLYSLVQLFQHHTKHDDLLS</sequence>
<gene>
    <name type="primary">BHLH157</name>
    <name type="ordered locus">At1g64625</name>
    <name type="ORF">F1N19</name>
</gene>